<keyword id="KW-0687">Ribonucleoprotein</keyword>
<keyword id="KW-0689">Ribosomal protein</keyword>
<sequence>MSRRCELTGKAVLTGHLVSHSNRKTKRRFLPNLCNVTLLSDTLGRSVRLRISANALRSVEHRGGLDAFLVKAGEQDLSQNARLLKREIEKKLAAAA</sequence>
<protein>
    <recommendedName>
        <fullName evidence="1">Large ribosomal subunit protein bL28</fullName>
    </recommendedName>
    <alternativeName>
        <fullName evidence="2">50S ribosomal protein L28</fullName>
    </alternativeName>
</protein>
<comment type="similarity">
    <text evidence="1">Belongs to the bacterial ribosomal protein bL28 family.</text>
</comment>
<organism>
    <name type="scientific">Methylobacterium sp. (strain 4-46)</name>
    <dbReference type="NCBI Taxonomy" id="426117"/>
    <lineage>
        <taxon>Bacteria</taxon>
        <taxon>Pseudomonadati</taxon>
        <taxon>Pseudomonadota</taxon>
        <taxon>Alphaproteobacteria</taxon>
        <taxon>Hyphomicrobiales</taxon>
        <taxon>Methylobacteriaceae</taxon>
        <taxon>Methylobacterium</taxon>
    </lineage>
</organism>
<reference key="1">
    <citation type="submission" date="2008-02" db="EMBL/GenBank/DDBJ databases">
        <title>Complete sequence of chromosome of Methylobacterium sp. 4-46.</title>
        <authorList>
            <consortium name="US DOE Joint Genome Institute"/>
            <person name="Copeland A."/>
            <person name="Lucas S."/>
            <person name="Lapidus A."/>
            <person name="Glavina del Rio T."/>
            <person name="Dalin E."/>
            <person name="Tice H."/>
            <person name="Bruce D."/>
            <person name="Goodwin L."/>
            <person name="Pitluck S."/>
            <person name="Chertkov O."/>
            <person name="Brettin T."/>
            <person name="Detter J.C."/>
            <person name="Han C."/>
            <person name="Kuske C.R."/>
            <person name="Schmutz J."/>
            <person name="Larimer F."/>
            <person name="Land M."/>
            <person name="Hauser L."/>
            <person name="Kyrpides N."/>
            <person name="Ivanova N."/>
            <person name="Marx C.J."/>
            <person name="Richardson P."/>
        </authorList>
    </citation>
    <scope>NUCLEOTIDE SEQUENCE [LARGE SCALE GENOMIC DNA]</scope>
    <source>
        <strain>4-46</strain>
    </source>
</reference>
<gene>
    <name evidence="1" type="primary">rpmB</name>
    <name type="ordered locus">M446_3667</name>
</gene>
<evidence type="ECO:0000255" key="1">
    <source>
        <dbReference type="HAMAP-Rule" id="MF_00373"/>
    </source>
</evidence>
<evidence type="ECO:0000305" key="2"/>
<proteinExistence type="inferred from homology"/>
<dbReference type="EMBL" id="CP000943">
    <property type="protein sequence ID" value="ACA18048.1"/>
    <property type="molecule type" value="Genomic_DNA"/>
</dbReference>
<dbReference type="RefSeq" id="WP_012333447.1">
    <property type="nucleotide sequence ID" value="NC_010511.1"/>
</dbReference>
<dbReference type="SMR" id="B0UCJ9"/>
<dbReference type="STRING" id="426117.M446_3667"/>
<dbReference type="KEGG" id="met:M446_3667"/>
<dbReference type="eggNOG" id="COG0227">
    <property type="taxonomic scope" value="Bacteria"/>
</dbReference>
<dbReference type="HOGENOM" id="CLU_064548_4_2_5"/>
<dbReference type="GO" id="GO:0022625">
    <property type="term" value="C:cytosolic large ribosomal subunit"/>
    <property type="evidence" value="ECO:0007669"/>
    <property type="project" value="TreeGrafter"/>
</dbReference>
<dbReference type="GO" id="GO:0003735">
    <property type="term" value="F:structural constituent of ribosome"/>
    <property type="evidence" value="ECO:0007669"/>
    <property type="project" value="InterPro"/>
</dbReference>
<dbReference type="GO" id="GO:0006412">
    <property type="term" value="P:translation"/>
    <property type="evidence" value="ECO:0007669"/>
    <property type="project" value="UniProtKB-UniRule"/>
</dbReference>
<dbReference type="Gene3D" id="2.30.170.40">
    <property type="entry name" value="Ribosomal protein L28/L24"/>
    <property type="match status" value="1"/>
</dbReference>
<dbReference type="HAMAP" id="MF_00373">
    <property type="entry name" value="Ribosomal_bL28"/>
    <property type="match status" value="1"/>
</dbReference>
<dbReference type="InterPro" id="IPR026569">
    <property type="entry name" value="Ribosomal_bL28"/>
</dbReference>
<dbReference type="InterPro" id="IPR034704">
    <property type="entry name" value="Ribosomal_bL28/bL31-like_sf"/>
</dbReference>
<dbReference type="InterPro" id="IPR001383">
    <property type="entry name" value="Ribosomal_bL28_bact-type"/>
</dbReference>
<dbReference type="InterPro" id="IPR037147">
    <property type="entry name" value="Ribosomal_bL28_sf"/>
</dbReference>
<dbReference type="NCBIfam" id="TIGR00009">
    <property type="entry name" value="L28"/>
    <property type="match status" value="1"/>
</dbReference>
<dbReference type="PANTHER" id="PTHR13528">
    <property type="entry name" value="39S RIBOSOMAL PROTEIN L28, MITOCHONDRIAL"/>
    <property type="match status" value="1"/>
</dbReference>
<dbReference type="PANTHER" id="PTHR13528:SF2">
    <property type="entry name" value="LARGE RIBOSOMAL SUBUNIT PROTEIN BL28M"/>
    <property type="match status" value="1"/>
</dbReference>
<dbReference type="Pfam" id="PF00830">
    <property type="entry name" value="Ribosomal_L28"/>
    <property type="match status" value="1"/>
</dbReference>
<dbReference type="SUPFAM" id="SSF143800">
    <property type="entry name" value="L28p-like"/>
    <property type="match status" value="1"/>
</dbReference>
<feature type="chain" id="PRO_1000121658" description="Large ribosomal subunit protein bL28">
    <location>
        <begin position="1"/>
        <end position="96"/>
    </location>
</feature>
<accession>B0UCJ9</accession>
<name>RL28_METS4</name>